<protein>
    <recommendedName>
        <fullName evidence="1">tRNA(Met) cytidine acetate ligase</fullName>
        <ecNumber evidence="1">6.3.4.-</ecNumber>
    </recommendedName>
</protein>
<accession>B1IIK1</accession>
<gene>
    <name evidence="1" type="primary">tmcAL</name>
    <name type="ordered locus">CLD_2147</name>
</gene>
<proteinExistence type="inferred from homology"/>
<dbReference type="EC" id="6.3.4.-" evidence="1"/>
<dbReference type="EMBL" id="CP000939">
    <property type="protein sequence ID" value="ACA44558.1"/>
    <property type="molecule type" value="Genomic_DNA"/>
</dbReference>
<dbReference type="RefSeq" id="WP_003403713.1">
    <property type="nucleotide sequence ID" value="NC_010516.1"/>
</dbReference>
<dbReference type="SMR" id="B1IIK1"/>
<dbReference type="KEGG" id="cbb:CLD_2147"/>
<dbReference type="HOGENOM" id="CLU_038915_0_1_9"/>
<dbReference type="Proteomes" id="UP000008541">
    <property type="component" value="Chromosome"/>
</dbReference>
<dbReference type="GO" id="GO:0005737">
    <property type="term" value="C:cytoplasm"/>
    <property type="evidence" value="ECO:0007669"/>
    <property type="project" value="UniProtKB-SubCell"/>
</dbReference>
<dbReference type="GO" id="GO:0005524">
    <property type="term" value="F:ATP binding"/>
    <property type="evidence" value="ECO:0007669"/>
    <property type="project" value="UniProtKB-KW"/>
</dbReference>
<dbReference type="GO" id="GO:0016879">
    <property type="term" value="F:ligase activity, forming carbon-nitrogen bonds"/>
    <property type="evidence" value="ECO:0007669"/>
    <property type="project" value="UniProtKB-UniRule"/>
</dbReference>
<dbReference type="GO" id="GO:0000049">
    <property type="term" value="F:tRNA binding"/>
    <property type="evidence" value="ECO:0007669"/>
    <property type="project" value="UniProtKB-KW"/>
</dbReference>
<dbReference type="GO" id="GO:0006400">
    <property type="term" value="P:tRNA modification"/>
    <property type="evidence" value="ECO:0007669"/>
    <property type="project" value="UniProtKB-UniRule"/>
</dbReference>
<dbReference type="Gene3D" id="3.40.50.620">
    <property type="entry name" value="HUPs"/>
    <property type="match status" value="1"/>
</dbReference>
<dbReference type="HAMAP" id="MF_01539">
    <property type="entry name" value="TmcAL"/>
    <property type="match status" value="1"/>
</dbReference>
<dbReference type="InterPro" id="IPR014729">
    <property type="entry name" value="Rossmann-like_a/b/a_fold"/>
</dbReference>
<dbReference type="InterPro" id="IPR008513">
    <property type="entry name" value="tRNA(Met)_cyd_acetate_ligase"/>
</dbReference>
<dbReference type="NCBIfam" id="NF010191">
    <property type="entry name" value="PRK13670.1"/>
    <property type="match status" value="1"/>
</dbReference>
<dbReference type="PANTHER" id="PTHR37825">
    <property type="entry name" value="TRNA(MET) CYTIDINE ACETATE LIGASE"/>
    <property type="match status" value="1"/>
</dbReference>
<dbReference type="PANTHER" id="PTHR37825:SF1">
    <property type="entry name" value="TRNA(MET) CYTIDINE ACETATE LIGASE"/>
    <property type="match status" value="1"/>
</dbReference>
<dbReference type="Pfam" id="PF05636">
    <property type="entry name" value="HIGH_NTase1"/>
    <property type="match status" value="1"/>
</dbReference>
<dbReference type="SUPFAM" id="SSF52374">
    <property type="entry name" value="Nucleotidylyl transferase"/>
    <property type="match status" value="1"/>
</dbReference>
<comment type="function">
    <text evidence="1">Catalyzes the formation of N(4)-acetylcytidine (ac(4)C) at the wobble position of elongator tRNA(Met), using acetate and ATP as substrates. First activates an acetate ion to form acetyladenylate (Ac-AMP) and then transfers the acetyl group to tRNA to form ac(4)C34.</text>
</comment>
<comment type="catalytic activity">
    <reaction evidence="1">
        <text>cytidine(34) in elongator tRNA(Met) + acetate + ATP = N(4)-acetylcytidine(34) in elongator tRNA(Met) + AMP + diphosphate</text>
        <dbReference type="Rhea" id="RHEA:58144"/>
        <dbReference type="Rhea" id="RHEA-COMP:10693"/>
        <dbReference type="Rhea" id="RHEA-COMP:10694"/>
        <dbReference type="ChEBI" id="CHEBI:30089"/>
        <dbReference type="ChEBI" id="CHEBI:30616"/>
        <dbReference type="ChEBI" id="CHEBI:33019"/>
        <dbReference type="ChEBI" id="CHEBI:74900"/>
        <dbReference type="ChEBI" id="CHEBI:82748"/>
        <dbReference type="ChEBI" id="CHEBI:456215"/>
    </reaction>
</comment>
<comment type="subcellular location">
    <subcellularLocation>
        <location evidence="1">Cytoplasm</location>
    </subcellularLocation>
</comment>
<comment type="similarity">
    <text evidence="1">Belongs to the TmcAL family.</text>
</comment>
<feature type="chain" id="PRO_1000198854" description="tRNA(Met) cytidine acetate ligase">
    <location>
        <begin position="1"/>
        <end position="409"/>
    </location>
</feature>
<feature type="binding site" evidence="1">
    <location>
        <begin position="7"/>
        <end position="20"/>
    </location>
    <ligand>
        <name>ATP</name>
        <dbReference type="ChEBI" id="CHEBI:30616"/>
    </ligand>
</feature>
<feature type="binding site" evidence="1">
    <location>
        <position position="102"/>
    </location>
    <ligand>
        <name>ATP</name>
        <dbReference type="ChEBI" id="CHEBI:30616"/>
    </ligand>
</feature>
<feature type="binding site" evidence="1">
    <location>
        <position position="169"/>
    </location>
    <ligand>
        <name>ATP</name>
        <dbReference type="ChEBI" id="CHEBI:30616"/>
    </ligand>
</feature>
<feature type="binding site" evidence="1">
    <location>
        <position position="194"/>
    </location>
    <ligand>
        <name>ATP</name>
        <dbReference type="ChEBI" id="CHEBI:30616"/>
    </ligand>
</feature>
<evidence type="ECO:0000255" key="1">
    <source>
        <dbReference type="HAMAP-Rule" id="MF_01539"/>
    </source>
</evidence>
<reference key="1">
    <citation type="journal article" date="2007" name="PLoS ONE">
        <title>Analysis of the neurotoxin complex genes in Clostridium botulinum A1-A4 and B1 strains: BoNT/A3, /Ba4 and /B1 clusters are located within plasmids.</title>
        <authorList>
            <person name="Smith T.J."/>
            <person name="Hill K.K."/>
            <person name="Foley B.T."/>
            <person name="Detter J.C."/>
            <person name="Munk A.C."/>
            <person name="Bruce D.C."/>
            <person name="Doggett N.A."/>
            <person name="Smith L.A."/>
            <person name="Marks J.D."/>
            <person name="Xie G."/>
            <person name="Brettin T.S."/>
        </authorList>
    </citation>
    <scope>NUCLEOTIDE SEQUENCE [LARGE SCALE GENOMIC DNA]</scope>
    <source>
        <strain>Okra / Type B1</strain>
    </source>
</reference>
<keyword id="KW-0067">ATP-binding</keyword>
<keyword id="KW-0963">Cytoplasm</keyword>
<keyword id="KW-0436">Ligase</keyword>
<keyword id="KW-0547">Nucleotide-binding</keyword>
<keyword id="KW-0694">RNA-binding</keyword>
<keyword id="KW-0819">tRNA processing</keyword>
<keyword id="KW-0820">tRNA-binding</keyword>
<sequence length="409" mass="46840">MNVSAIVVEYNPMHNGHLYHIEKTKKLTNCDALVCIMSGNFVQRGFPSILDKWTKANMAISNGVDLVIELPTLYSLSSAEFFSFGAVSILDSLNIINSICFGSEIGNINVLQDIATTLLEEPLEYKILLKNYLDKGISFAKARNLALVELNRDNKIMSENISKILSLSNNILGIEYLKSLLLLNSSIKPFTITREGADYKDENLHEEYSSASSIRKYLKENKNINILKDFLPLEGFLEFKRLITKGYNFSMEDSMINYIRYKYISGYKNLHNLIDVSEGLDNRIYKSLEKSFTYDSLVGEIKSKRYAYSRIGRILCQYFIGFENYDLNSLLKSTPNYMRVLASNERGLKVLKEVKKHSSINIYTKLPKNTNTLLSLDIKATNAYSLLNNNIRFNEDYFRSPTIIKNTIY</sequence>
<name>TMCAL_CLOBK</name>
<organism>
    <name type="scientific">Clostridium botulinum (strain Okra / Type B1)</name>
    <dbReference type="NCBI Taxonomy" id="498213"/>
    <lineage>
        <taxon>Bacteria</taxon>
        <taxon>Bacillati</taxon>
        <taxon>Bacillota</taxon>
        <taxon>Clostridia</taxon>
        <taxon>Eubacteriales</taxon>
        <taxon>Clostridiaceae</taxon>
        <taxon>Clostridium</taxon>
    </lineage>
</organism>